<organismHost>
    <name type="scientific">Gallus gallus</name>
    <name type="common">Chicken</name>
    <dbReference type="NCBI Taxonomy" id="9031"/>
</organismHost>
<sequence length="606" mass="65005">MSLCRLLLMLAMCCGVSRGSQTLPAGGRRGQRRRDNSAQWSTQQRPEGAVGPAPLTDVVTAAGTRTVPDVDQAGAVLVRQYNLVTSPLGLATLGSTNALLYAAPVSPLMPLQDGTTSNIMSTESSNYAQYRVQGLTVRWRPVVPNAVGGFSISMAYWPQTTSTPTSIDMNSITSTDVRVVLQPGSAGLLTIPHERLAYKNNGWRSVETVSVPQEDATSGMLMVCVHGTPWNSYTNSVYTGPLGMVDFAIKLQLRNLSPGNTNARVTRVKVTAPHTIKADPSGATITTAAAARFMADVRWGLGTAEDGEIGHGILGVLFNLADTVLGGLPSTLLRAASGQYMYGRPVGNANGEPEVKLYMSVEDAVNDKPIMVPHDIDLGTSTVTCQDYGNQHVDDRPSPAPAPKRALGTLRSGDVLRITGSMQYVTNAELLPQSVSQGYFGAGSTMMVHNLITGVRAPASSVDWTKATVDGVQVKTVDASSGSNRFAALPAFGKPAVWGPQGAGYFYQYNSTHQEWIYFLQNGSSVVWYAYTNMLGQKSDTSILFEVRPIQASDQPWFLAHHTGGDDCTTCLPLGLRTCCRQAPEDQSPETRRLLDRLSRTFPSPP</sequence>
<gene>
    <name type="ORF">ORF2</name>
</gene>
<name>CAPSD_AHEV</name>
<keyword id="KW-0024">Alternative initiation</keyword>
<keyword id="KW-0167">Capsid protein</keyword>
<keyword id="KW-0325">Glycoprotein</keyword>
<keyword id="KW-1035">Host cytoplasm</keyword>
<keyword id="KW-1038">Host endoplasmic reticulum</keyword>
<keyword id="KW-1040">Host Golgi apparatus</keyword>
<keyword id="KW-1048">Host nucleus</keyword>
<keyword id="KW-1185">Reference proteome</keyword>
<keyword id="KW-0694">RNA-binding</keyword>
<keyword id="KW-0964">Secreted</keyword>
<keyword id="KW-0732">Signal</keyword>
<keyword id="KW-1140">T=1 icosahedral capsid protein</keyword>
<keyword id="KW-0946">Virion</keyword>
<organism>
    <name type="scientific">Avian hepatitis E virus (isolate Chicken/California/Meng)</name>
    <name type="common">AHEV</name>
    <dbReference type="NCBI Taxonomy" id="516993"/>
    <lineage>
        <taxon>Viruses</taxon>
        <taxon>Riboviria</taxon>
        <taxon>Orthornavirae</taxon>
        <taxon>Kitrinoviricota</taxon>
        <taxon>Alsuviricetes</taxon>
        <taxon>Hepelivirales</taxon>
        <taxon>Hepeviridae</taxon>
        <taxon>Orthohepevirinae</taxon>
        <taxon>Avihepevirus</taxon>
        <taxon>Avihepevirus magniiecur</taxon>
    </lineage>
</organism>
<accession>Q913Y7</accession>
<feature type="signal peptide" evidence="6">
    <location>
        <begin position="1"/>
        <end position="19"/>
    </location>
</feature>
<feature type="chain" id="PRO_0000334533" description="Pro-secreted protein ORF2">
    <location>
        <begin position="20"/>
        <end position="606"/>
    </location>
</feature>
<feature type="chain" id="PRO_0000456927" description="Secreted protein ORF2">
    <location>
        <begin position="35"/>
        <end position="606"/>
    </location>
</feature>
<feature type="region of interest" description="Disordered" evidence="7">
    <location>
        <begin position="22"/>
        <end position="54"/>
    </location>
</feature>
<feature type="region of interest" description="particle formation" evidence="1">
    <location>
        <begin position="313"/>
        <end position="339"/>
    </location>
</feature>
<feature type="short sequence motif" description="Nuclear localization signal" evidence="2">
    <location>
        <begin position="28"/>
        <end position="34"/>
    </location>
</feature>
<feature type="glycosylation site" description="N-linked (GlcNAc...) asparagine; by host" evidence="3">
    <location>
        <position position="255"/>
    </location>
</feature>
<feature type="glycosylation site" description="N-linked (GlcNAc...) asparagine; by host" evidence="4">
    <location>
        <position position="510"/>
    </location>
</feature>
<feature type="splice variant" id="VSP_061724" description="In isoform Capsid protein.">
    <location>
        <begin position="1"/>
        <end position="11"/>
    </location>
</feature>
<comment type="function">
    <molecule>Isoform Secreted protein ORF2</molecule>
    <text evidence="5">Plays a role in the inhibition of host antibody-mediated neutralization without blocking viral cell entry.</text>
</comment>
<comment type="function">
    <molecule>Isoform Capsid protein</molecule>
    <text evidence="1">Forms an icosahedral capsid with a T=1 symmetry and a 34 nm diameter. The capsid is composed of 60 copies linked to each other (By similarity). Binds to the 5' end of the genomic RNA to mediate genome encapsidation (By similarity).</text>
</comment>
<comment type="subunit">
    <molecule>Isoform Secreted protein ORF2</molecule>
    <text evidence="5">Homodimer.</text>
</comment>
<comment type="subunit">
    <molecule>Isoform Capsid protein</molecule>
    <text evidence="3">Self-assembles to form the capsid (By similarity). The capsid is dominated by dimers that define the 30 morphological units (By similarity). Interacts with phosphorylated protein ORF3 (By similarity).</text>
</comment>
<comment type="subcellular location">
    <molecule>Isoform Secreted protein ORF2</molecule>
    <subcellularLocation>
        <location evidence="4">Secreted</location>
    </subcellularLocation>
    <text evidence="3">Cotranslationally translocated into the ER.</text>
</comment>
<comment type="subcellular location">
    <molecule>Isoform Capsid protein</molecule>
    <subcellularLocation>
        <location evidence="4">Virion</location>
    </subcellularLocation>
    <subcellularLocation>
        <location evidence="4">Host cytoplasm</location>
    </subcellularLocation>
    <subcellularLocation>
        <location evidence="4">Host endoplasmic reticulum</location>
    </subcellularLocation>
    <subcellularLocation>
        <location evidence="4">Host Golgi apparatus</location>
    </subcellularLocation>
    <subcellularLocation>
        <location evidence="3">Host cell surface</location>
    </subcellularLocation>
    <subcellularLocation>
        <location evidence="4">Host nucleus</location>
    </subcellularLocation>
    <text evidence="2 4 5">Translation from the internal AUG codon disrupts the signal sequence, producing a cytoplasmic protein that is responsible for virion assembly (By similarity). Shuttles between cytoplasm and nucleus (By similarity). This isoform is found in quasi-enveloped virions (By similarity).</text>
</comment>
<comment type="alternative products">
    <event type="alternative initiation"/>
    <isoform>
        <id>Q913Y7-1</id>
        <name>Secreted protein ORF2</name>
        <name>ORF2s</name>
        <name>ORF2g</name>
        <sequence type="displayed"/>
    </isoform>
    <isoform>
        <id>Q913Y7-2</id>
        <name>Capsid protein</name>
        <name>ORF2c</name>
        <name>ORF2i</name>
        <sequence type="described" ref="VSP_061724"/>
    </isoform>
</comment>
<comment type="domain">
    <text evidence="2">The Arginine-Rich Motif (ARM) acts as a nuclear localization signal that drives the nuclear translocation of isoform capsid protein.</text>
</comment>
<comment type="PTM">
    <molecule>Isoform Secreted protein ORF2</molecule>
    <text evidence="4">N-glycosylated.</text>
</comment>
<comment type="miscellaneous">
    <text evidence="4">The viral particles present in feces and bile are non-enveloped, while those in circulating blood and culture supernatants are covered with a cellular membrane (quasi-enveloped).</text>
</comment>
<comment type="similarity">
    <text evidence="8">Belongs to the hepevirus capsid protein family.</text>
</comment>
<dbReference type="EMBL" id="AY043166">
    <property type="protein sequence ID" value="AAL13367.1"/>
    <property type="molecule type" value="Genomic_RNA"/>
</dbReference>
<dbReference type="EMBL" id="AY535004">
    <property type="protein sequence ID" value="AAS45831.1"/>
    <property type="molecule type" value="Genomic_RNA"/>
</dbReference>
<dbReference type="RefSeq" id="YP_009001467.1">
    <property type="nucleotide sequence ID" value="NC_023425.1"/>
</dbReference>
<dbReference type="SMR" id="Q913Y7"/>
<dbReference type="KEGG" id="vg:18263428"/>
<dbReference type="Proteomes" id="UP000007439">
    <property type="component" value="Genome"/>
</dbReference>
<dbReference type="Proteomes" id="UP000139094">
    <property type="component" value="Segment"/>
</dbReference>
<dbReference type="GO" id="GO:0005576">
    <property type="term" value="C:extracellular region"/>
    <property type="evidence" value="ECO:0007669"/>
    <property type="project" value="UniProtKB-SubCell"/>
</dbReference>
<dbReference type="GO" id="GO:0044165">
    <property type="term" value="C:host cell endoplasmic reticulum"/>
    <property type="evidence" value="ECO:0007669"/>
    <property type="project" value="UniProtKB-SubCell"/>
</dbReference>
<dbReference type="GO" id="GO:0044177">
    <property type="term" value="C:host cell Golgi apparatus"/>
    <property type="evidence" value="ECO:0007669"/>
    <property type="project" value="UniProtKB-SubCell"/>
</dbReference>
<dbReference type="GO" id="GO:0042025">
    <property type="term" value="C:host cell nucleus"/>
    <property type="evidence" value="ECO:0007669"/>
    <property type="project" value="UniProtKB-SubCell"/>
</dbReference>
<dbReference type="GO" id="GO:0044228">
    <property type="term" value="C:host cell surface"/>
    <property type="evidence" value="ECO:0007669"/>
    <property type="project" value="UniProtKB-SubCell"/>
</dbReference>
<dbReference type="GO" id="GO:0039615">
    <property type="term" value="C:T=1 icosahedral viral capsid"/>
    <property type="evidence" value="ECO:0007669"/>
    <property type="project" value="UniProtKB-KW"/>
</dbReference>
<dbReference type="GO" id="GO:0003723">
    <property type="term" value="F:RNA binding"/>
    <property type="evidence" value="ECO:0007669"/>
    <property type="project" value="UniProtKB-KW"/>
</dbReference>
<dbReference type="GO" id="GO:0005198">
    <property type="term" value="F:structural molecule activity"/>
    <property type="evidence" value="ECO:0007669"/>
    <property type="project" value="InterPro"/>
</dbReference>
<dbReference type="Gene3D" id="2.40.30.190">
    <property type="match status" value="1"/>
</dbReference>
<dbReference type="Gene3D" id="2.60.120.20">
    <property type="match status" value="1"/>
</dbReference>
<dbReference type="InterPro" id="IPR048802">
    <property type="entry name" value="SP2_M"/>
</dbReference>
<dbReference type="InterPro" id="IPR004261">
    <property type="entry name" value="SP2_N"/>
</dbReference>
<dbReference type="InterPro" id="IPR029053">
    <property type="entry name" value="Viral_coat"/>
</dbReference>
<dbReference type="Pfam" id="PF03014">
    <property type="entry name" value="SP2"/>
    <property type="match status" value="1"/>
</dbReference>
<dbReference type="Pfam" id="PF20751">
    <property type="entry name" value="SP2_M"/>
    <property type="match status" value="1"/>
</dbReference>
<dbReference type="SUPFAM" id="SSF88633">
    <property type="entry name" value="Positive stranded ssRNA viruses"/>
    <property type="match status" value="1"/>
</dbReference>
<evidence type="ECO:0000250" key="1">
    <source>
        <dbReference type="UniProtKB" id="P29326"/>
    </source>
</evidence>
<evidence type="ECO:0000250" key="2">
    <source>
        <dbReference type="UniProtKB" id="P33426"/>
    </source>
</evidence>
<evidence type="ECO:0000250" key="3">
    <source>
        <dbReference type="UniProtKB" id="Q68985"/>
    </source>
</evidence>
<evidence type="ECO:0000250" key="4">
    <source>
        <dbReference type="UniProtKB" id="Q81871"/>
    </source>
</evidence>
<evidence type="ECO:0000250" key="5">
    <source>
        <dbReference type="UniProtKB" id="Q9YLQ9"/>
    </source>
</evidence>
<evidence type="ECO:0000255" key="6"/>
<evidence type="ECO:0000256" key="7">
    <source>
        <dbReference type="SAM" id="MobiDB-lite"/>
    </source>
</evidence>
<evidence type="ECO:0000305" key="8"/>
<proteinExistence type="inferred from homology"/>
<protein>
    <recommendedName>
        <fullName>Pro-secreted protein ORF2</fullName>
    </recommendedName>
    <alternativeName>
        <fullName>Protein ORF2</fullName>
        <shortName>pORF2</shortName>
    </alternativeName>
    <component>
        <recommendedName>
            <fullName>Secreted protein ORF2</fullName>
            <shortName>ORF2s</shortName>
        </recommendedName>
    </component>
</protein>
<reference key="1">
    <citation type="journal article" date="2001" name="J. Gen. Virol.">
        <title>Genetic identification and characterization of a novel virus related to human hepatitis E virus from chickens with hepatitis-splenomegaly syndrome in the United States.</title>
        <authorList>
            <person name="Haqshenas G."/>
            <person name="Shivaprasad H.L."/>
            <person name="Woolcock P.R."/>
            <person name="Read D.H."/>
            <person name="Meng X.J."/>
        </authorList>
    </citation>
    <scope>NUCLEOTIDE SEQUENCE [GENOMIC RNA]</scope>
</reference>
<reference key="2">
    <citation type="journal article" date="2004" name="J. Gen. Virol.">
        <title>Determination and analysis of the complete genomic sequence of avian hepatitis E virus (avian HEV) and attempts to infect rhesus monkeys with avian HEV.</title>
        <authorList>
            <person name="Huang F.F."/>
            <person name="Sun Z.F."/>
            <person name="Emerson S.U."/>
            <person name="Purcell R.H."/>
            <person name="Shivaprasad H.L."/>
            <person name="Pierson F.W."/>
            <person name="Toth T.E."/>
            <person name="Meng X.J."/>
        </authorList>
    </citation>
    <scope>NUCLEOTIDE SEQUENCE [GENOMIC RNA]</scope>
</reference>